<sequence length="225" mass="24287">METCSPPVTFITYALYGIKTSPAWTLPNFEQVICSCDWGYRLIAVGAESKCDVTPQGSFVIQHGASITALVLDCGVEFCSYAFTHAENTRVPLTTEDGSVLVVPFCGWVCVGRDRCLRSMSGGVLTISWDTSQTAYISVAVYRPPTLQCHALDCTRAETTVCSTAAITDASESDPLYADQEGDQTQDQDGGHDFLETILMESDLYGTNGASALLEPCFPCLSNND</sequence>
<feature type="chain" id="PRO_0000115900" description="Nuclear protein UL4 homolog">
    <location>
        <begin position="1"/>
        <end position="225"/>
    </location>
</feature>
<keyword id="KW-1048">Host nucleus</keyword>
<keyword id="KW-1185">Reference proteome</keyword>
<evidence type="ECO:0000250" key="1"/>
<evidence type="ECO:0000305" key="2"/>
<protein>
    <recommendedName>
        <fullName>Nuclear protein UL4 homolog</fullName>
    </recommendedName>
</protein>
<reference key="1">
    <citation type="journal article" date="1992" name="Virology">
        <title>The DNA sequence of equine herpesvirus-1.</title>
        <authorList>
            <person name="Telford E.A.R."/>
            <person name="Watson M.S."/>
            <person name="McBride K."/>
            <person name="Davison A.J."/>
        </authorList>
    </citation>
    <scope>NUCLEOTIDE SEQUENCE [LARGE SCALE GENOMIC DNA]</scope>
</reference>
<accession>P28943</accession>
<accession>Q6S6U6</accession>
<organismHost>
    <name type="scientific">Equus caballus</name>
    <name type="common">Horse</name>
    <dbReference type="NCBI Taxonomy" id="9796"/>
</organismHost>
<gene>
    <name type="ordered locus">58</name>
</gene>
<dbReference type="EMBL" id="AY665713">
    <property type="protein sequence ID" value="AAT67315.1"/>
    <property type="molecule type" value="Genomic_DNA"/>
</dbReference>
<dbReference type="PIR" id="D36801">
    <property type="entry name" value="WZBEF1"/>
</dbReference>
<dbReference type="KEGG" id="vg:2948566"/>
<dbReference type="Proteomes" id="UP000001189">
    <property type="component" value="Segment"/>
</dbReference>
<dbReference type="GO" id="GO:0042025">
    <property type="term" value="C:host cell nucleus"/>
    <property type="evidence" value="ECO:0007669"/>
    <property type="project" value="UniProtKB-SubCell"/>
</dbReference>
<dbReference type="InterPro" id="IPR004958">
    <property type="entry name" value="Herpes_UL4"/>
</dbReference>
<dbReference type="Pfam" id="PF03277">
    <property type="entry name" value="Herpes_UL4"/>
    <property type="match status" value="1"/>
</dbReference>
<comment type="subcellular location">
    <subcellularLocation>
        <location evidence="1">Host nucleus</location>
    </subcellularLocation>
</comment>
<comment type="similarity">
    <text evidence="2">Belongs to the alphaherpesvirinae HHV-1 UL4 family.</text>
</comment>
<organism>
    <name type="scientific">Equine herpesvirus 1 (strain Ab4p)</name>
    <name type="common">EHV-1</name>
    <name type="synonym">Equine abortion virus</name>
    <dbReference type="NCBI Taxonomy" id="31520"/>
    <lineage>
        <taxon>Viruses</taxon>
        <taxon>Duplodnaviria</taxon>
        <taxon>Heunggongvirae</taxon>
        <taxon>Peploviricota</taxon>
        <taxon>Herviviricetes</taxon>
        <taxon>Herpesvirales</taxon>
        <taxon>Orthoherpesviridae</taxon>
        <taxon>Alphaherpesvirinae</taxon>
        <taxon>Varicellovirus</taxon>
        <taxon>Varicellovirus equidalpha1</taxon>
        <taxon>Equid alphaherpesvirus 1</taxon>
    </lineage>
</organism>
<name>NP04_EHV1B</name>
<proteinExistence type="inferred from homology"/>